<organism>
    <name type="scientific">Tabanus yao</name>
    <name type="common">Horsefly</name>
    <dbReference type="NCBI Taxonomy" id="485572"/>
    <lineage>
        <taxon>Eukaryota</taxon>
        <taxon>Metazoa</taxon>
        <taxon>Ecdysozoa</taxon>
        <taxon>Arthropoda</taxon>
        <taxon>Hexapoda</taxon>
        <taxon>Insecta</taxon>
        <taxon>Pterygota</taxon>
        <taxon>Neoptera</taxon>
        <taxon>Endopterygota</taxon>
        <taxon>Diptera</taxon>
        <taxon>Brachycera</taxon>
        <taxon>Tabanomorpha</taxon>
        <taxon>Tabanoidea</taxon>
        <taxon>Tabanidae</taxon>
        <taxon>Tabanus</taxon>
    </lineage>
</organism>
<reference evidence="6" key="1">
    <citation type="journal article" date="2009" name="Mol. Cell. Proteomics">
        <title>Anti-thrombosis repertoire of blood-feeding horsefly salivary glands.</title>
        <authorList>
            <person name="Ma D."/>
            <person name="Wang Y."/>
            <person name="Yang H."/>
            <person name="Wu J."/>
            <person name="An S."/>
            <person name="Gao L."/>
            <person name="Xu X."/>
            <person name="Lai R."/>
        </authorList>
    </citation>
    <scope>NUCLEOTIDE SEQUENCE [MRNA]</scope>
    <source>
        <tissue>Salivary gland</tissue>
    </source>
</reference>
<accession>C8YJG4</accession>
<keyword id="KW-1217">Cell adhesion impairing toxin</keyword>
<keyword id="KW-1199">Hemostasis impairing toxin</keyword>
<keyword id="KW-1201">Platelet aggregation inhibiting toxin</keyword>
<keyword id="KW-0964">Secreted</keyword>
<keyword id="KW-0732">Signal</keyword>
<keyword id="KW-0800">Toxin</keyword>
<comment type="function">
    <text evidence="2">Inhibits platelet aggregation induced by all agonists tested (ADP, arachidonic acid, the thromboxane A2 analog U46619, thrombin, and snake venom snaclecs (TMVA that activates platelet through GPIB, and stejnulxin that specifically acts through GPVI (GP6))) (By similarity). May act by competing with fibrinogen for binding to glycoprotein IIb/IIIa (ITGA2B/ITGB3) (By similarity).</text>
</comment>
<comment type="subcellular location">
    <subcellularLocation>
        <location evidence="1">Secreted</location>
    </subcellularLocation>
</comment>
<comment type="tissue specificity">
    <text evidence="1">Expressed in salivary glands.</text>
</comment>
<comment type="similarity">
    <text evidence="4">Belongs to the CRISP family.</text>
</comment>
<proteinExistence type="evidence at transcript level"/>
<evidence type="ECO:0000250" key="1">
    <source>
        <dbReference type="UniProtKB" id="C1IBY3"/>
    </source>
</evidence>
<evidence type="ECO:0000250" key="2">
    <source>
        <dbReference type="UniProtKB" id="C8YJA0"/>
    </source>
</evidence>
<evidence type="ECO:0000303" key="3">
    <source>
    </source>
</evidence>
<evidence type="ECO:0000305" key="4"/>
<evidence type="ECO:0000305" key="5">
    <source>
    </source>
</evidence>
<evidence type="ECO:0000312" key="6">
    <source>
        <dbReference type="EMBL" id="ACT33296.1"/>
    </source>
</evidence>
<protein>
    <recommendedName>
        <fullName evidence="3">Tabinhibitin 9</fullName>
    </recommendedName>
</protein>
<name>INH9_TABYA</name>
<sequence>MTSNLYYVLISPYSLAYMVQYRSVTTAAGECRGDMWAVCARISSDVTCARHANLQRSIRRCFYIRSTMCEIMLLRDHGDYPVASRMKVIVWDEELAALAKRHTQGCVPEAYKCRHTLRFWTPGQLNFEFYADKMPFTMSLISTAIKRGHMQKHNITRDIVEKYQPVGPKGNVKELALAIFDRVTAVGCGLTTWKLGGKARAFFTCNFFSENDYNRPVYKTGNSPGEKCIKKDETFKNLCFAQEPINPNEHNL</sequence>
<dbReference type="EMBL" id="FJ477725">
    <property type="protein sequence ID" value="ACT33296.1"/>
    <property type="molecule type" value="mRNA"/>
</dbReference>
<dbReference type="SMR" id="C8YJG4"/>
<dbReference type="GO" id="GO:0005576">
    <property type="term" value="C:extracellular region"/>
    <property type="evidence" value="ECO:0007669"/>
    <property type="project" value="UniProtKB-SubCell"/>
</dbReference>
<dbReference type="GO" id="GO:0090729">
    <property type="term" value="F:toxin activity"/>
    <property type="evidence" value="ECO:0007669"/>
    <property type="project" value="UniProtKB-KW"/>
</dbReference>
<dbReference type="CDD" id="cd05380">
    <property type="entry name" value="CAP_euk"/>
    <property type="match status" value="1"/>
</dbReference>
<dbReference type="Gene3D" id="3.40.33.10">
    <property type="entry name" value="CAP"/>
    <property type="match status" value="1"/>
</dbReference>
<dbReference type="InterPro" id="IPR014044">
    <property type="entry name" value="CAP_dom"/>
</dbReference>
<dbReference type="InterPro" id="IPR035940">
    <property type="entry name" value="CAP_sf"/>
</dbReference>
<dbReference type="Pfam" id="PF00188">
    <property type="entry name" value="CAP"/>
    <property type="match status" value="1"/>
</dbReference>
<dbReference type="SUPFAM" id="SSF55797">
    <property type="entry name" value="PR-1-like"/>
    <property type="match status" value="1"/>
</dbReference>
<feature type="signal peptide" evidence="2">
    <location>
        <begin position="1"/>
        <end position="23"/>
    </location>
</feature>
<feature type="chain" id="PRO_0000456096" description="Tabinhibitin 9" evidence="2">
    <location>
        <begin position="24"/>
        <end position="252"/>
    </location>
</feature>
<feature type="domain" description="SCP" evidence="2">
    <location>
        <begin position="63"/>
        <end position="207"/>
    </location>
</feature>
<feature type="short sequence motif" description="Cell attachment site" evidence="5">
    <location>
        <begin position="32"/>
        <end position="34"/>
    </location>
</feature>